<sequence>MVDGSIHVPVQSHEGQHDNSSSLNEEIQTSQDPLGIVESYQESSTSDFDKSHYTHNSSIAAADSEYGSAFIQGQSSNGSEIKSERPSIDKKLDVNIDSHPIEPPPFEHDIGLPASQVPAAEEEVESTPKAKPLYFLLDKRFWIVFFLGQVLSLCITATNTFNGYMSGISNIPAFQTFLVYALLTLVYTPYTVFRMGFKKYFEMIFRHGWKYIIFAFFDVEGNYFVVLAYQYTNMLSASLLDSWATVAVVILSFIFLKVRYHWSQILGVVACIGGLVLLVVSDVISRGDYSAVNPGLGDGYMIIGATCYGVSNTLEEYFASKLPLYVVIGQLSLYGSIISIIQTFIFDRHHLYTLHWTSEMGGYLAGFILVMFLLYSLAPILFRMSSATFYNISLLTSDFWSLVIGIHVFGYHVYWLYPIAFVLIILGLFVYHVFVDATRESIKPWLKKGQGVDGVGTVRRPPSLVSSNDELNKKNDIVVAHHDNEVKERIYDAYLSVKNVFVRKS</sequence>
<protein>
    <recommendedName>
        <fullName>Uncharacterized solute carrier family 35 member C320.08</fullName>
    </recommendedName>
</protein>
<proteinExistence type="evidence at protein level"/>
<name>YCN8_SCHPO</name>
<reference key="1">
    <citation type="journal article" date="2002" name="Nature">
        <title>The genome sequence of Schizosaccharomyces pombe.</title>
        <authorList>
            <person name="Wood V."/>
            <person name="Gwilliam R."/>
            <person name="Rajandream M.A."/>
            <person name="Lyne M.H."/>
            <person name="Lyne R."/>
            <person name="Stewart A."/>
            <person name="Sgouros J.G."/>
            <person name="Peat N."/>
            <person name="Hayles J."/>
            <person name="Baker S.G."/>
            <person name="Basham D."/>
            <person name="Bowman S."/>
            <person name="Brooks K."/>
            <person name="Brown D."/>
            <person name="Brown S."/>
            <person name="Chillingworth T."/>
            <person name="Churcher C.M."/>
            <person name="Collins M."/>
            <person name="Connor R."/>
            <person name="Cronin A."/>
            <person name="Davis P."/>
            <person name="Feltwell T."/>
            <person name="Fraser A."/>
            <person name="Gentles S."/>
            <person name="Goble A."/>
            <person name="Hamlin N."/>
            <person name="Harris D.E."/>
            <person name="Hidalgo J."/>
            <person name="Hodgson G."/>
            <person name="Holroyd S."/>
            <person name="Hornsby T."/>
            <person name="Howarth S."/>
            <person name="Huckle E.J."/>
            <person name="Hunt S."/>
            <person name="Jagels K."/>
            <person name="James K.D."/>
            <person name="Jones L."/>
            <person name="Jones M."/>
            <person name="Leather S."/>
            <person name="McDonald S."/>
            <person name="McLean J."/>
            <person name="Mooney P."/>
            <person name="Moule S."/>
            <person name="Mungall K.L."/>
            <person name="Murphy L.D."/>
            <person name="Niblett D."/>
            <person name="Odell C."/>
            <person name="Oliver K."/>
            <person name="O'Neil S."/>
            <person name="Pearson D."/>
            <person name="Quail M.A."/>
            <person name="Rabbinowitsch E."/>
            <person name="Rutherford K.M."/>
            <person name="Rutter S."/>
            <person name="Saunders D."/>
            <person name="Seeger K."/>
            <person name="Sharp S."/>
            <person name="Skelton J."/>
            <person name="Simmonds M.N."/>
            <person name="Squares R."/>
            <person name="Squares S."/>
            <person name="Stevens K."/>
            <person name="Taylor K."/>
            <person name="Taylor R.G."/>
            <person name="Tivey A."/>
            <person name="Walsh S.V."/>
            <person name="Warren T."/>
            <person name="Whitehead S."/>
            <person name="Woodward J.R."/>
            <person name="Volckaert G."/>
            <person name="Aert R."/>
            <person name="Robben J."/>
            <person name="Grymonprez B."/>
            <person name="Weltjens I."/>
            <person name="Vanstreels E."/>
            <person name="Rieger M."/>
            <person name="Schaefer M."/>
            <person name="Mueller-Auer S."/>
            <person name="Gabel C."/>
            <person name="Fuchs M."/>
            <person name="Duesterhoeft A."/>
            <person name="Fritzc C."/>
            <person name="Holzer E."/>
            <person name="Moestl D."/>
            <person name="Hilbert H."/>
            <person name="Borzym K."/>
            <person name="Langer I."/>
            <person name="Beck A."/>
            <person name="Lehrach H."/>
            <person name="Reinhardt R."/>
            <person name="Pohl T.M."/>
            <person name="Eger P."/>
            <person name="Zimmermann W."/>
            <person name="Wedler H."/>
            <person name="Wambutt R."/>
            <person name="Purnelle B."/>
            <person name="Goffeau A."/>
            <person name="Cadieu E."/>
            <person name="Dreano S."/>
            <person name="Gloux S."/>
            <person name="Lelaure V."/>
            <person name="Mottier S."/>
            <person name="Galibert F."/>
            <person name="Aves S.J."/>
            <person name="Xiang Z."/>
            <person name="Hunt C."/>
            <person name="Moore K."/>
            <person name="Hurst S.M."/>
            <person name="Lucas M."/>
            <person name="Rochet M."/>
            <person name="Gaillardin C."/>
            <person name="Tallada V.A."/>
            <person name="Garzon A."/>
            <person name="Thode G."/>
            <person name="Daga R.R."/>
            <person name="Cruzado L."/>
            <person name="Jimenez J."/>
            <person name="Sanchez M."/>
            <person name="del Rey F."/>
            <person name="Benito J."/>
            <person name="Dominguez A."/>
            <person name="Revuelta J.L."/>
            <person name="Moreno S."/>
            <person name="Armstrong J."/>
            <person name="Forsburg S.L."/>
            <person name="Cerutti L."/>
            <person name="Lowe T."/>
            <person name="McCombie W.R."/>
            <person name="Paulsen I."/>
            <person name="Potashkin J."/>
            <person name="Shpakovski G.V."/>
            <person name="Ussery D."/>
            <person name="Barrell B.G."/>
            <person name="Nurse P."/>
        </authorList>
    </citation>
    <scope>NUCLEOTIDE SEQUENCE [LARGE SCALE GENOMIC DNA]</scope>
    <source>
        <strain>972 / ATCC 24843</strain>
    </source>
</reference>
<reference key="2">
    <citation type="journal article" date="2006" name="Nat. Biotechnol.">
        <title>ORFeome cloning and global analysis of protein localization in the fission yeast Schizosaccharomyces pombe.</title>
        <authorList>
            <person name="Matsuyama A."/>
            <person name="Arai R."/>
            <person name="Yashiroda Y."/>
            <person name="Shirai A."/>
            <person name="Kamata A."/>
            <person name="Sekido S."/>
            <person name="Kobayashi Y."/>
            <person name="Hashimoto A."/>
            <person name="Hamamoto M."/>
            <person name="Hiraoka Y."/>
            <person name="Horinouchi S."/>
            <person name="Yoshida M."/>
        </authorList>
    </citation>
    <scope>SUBCELLULAR LOCATION [LARGE SCALE ANALYSIS]</scope>
</reference>
<reference key="3">
    <citation type="journal article" date="2008" name="J. Proteome Res.">
        <title>Phosphoproteome analysis of fission yeast.</title>
        <authorList>
            <person name="Wilson-Grady J.T."/>
            <person name="Villen J."/>
            <person name="Gygi S.P."/>
        </authorList>
    </citation>
    <scope>PHOSPHORYLATION [LARGE SCALE ANALYSIS] AT SER-463; SER-466 AND SER-467</scope>
    <scope>IDENTIFICATION BY MASS SPECTROMETRY</scope>
</reference>
<feature type="chain" id="PRO_0000343536" description="Uncharacterized solute carrier family 35 member C320.08">
    <location>
        <begin position="1"/>
        <end position="505"/>
    </location>
</feature>
<feature type="transmembrane region" description="Helical" evidence="1">
    <location>
        <begin position="141"/>
        <end position="161"/>
    </location>
</feature>
<feature type="transmembrane region" description="Helical" evidence="1">
    <location>
        <begin position="173"/>
        <end position="193"/>
    </location>
</feature>
<feature type="transmembrane region" description="Helical" evidence="1">
    <location>
        <begin position="208"/>
        <end position="228"/>
    </location>
</feature>
<feature type="transmembrane region" description="Helical" evidence="1">
    <location>
        <begin position="235"/>
        <end position="255"/>
    </location>
</feature>
<feature type="transmembrane region" description="Helical" evidence="1">
    <location>
        <begin position="265"/>
        <end position="285"/>
    </location>
</feature>
<feature type="transmembrane region" description="Helical" evidence="1">
    <location>
        <begin position="290"/>
        <end position="310"/>
    </location>
</feature>
<feature type="transmembrane region" description="Helical" evidence="1">
    <location>
        <begin position="326"/>
        <end position="346"/>
    </location>
</feature>
<feature type="transmembrane region" description="Helical" evidence="1">
    <location>
        <begin position="362"/>
        <end position="382"/>
    </location>
</feature>
<feature type="transmembrane region" description="Helical" evidence="1">
    <location>
        <begin position="389"/>
        <end position="409"/>
    </location>
</feature>
<feature type="transmembrane region" description="Helical" evidence="1">
    <location>
        <begin position="415"/>
        <end position="435"/>
    </location>
</feature>
<feature type="region of interest" description="Disordered" evidence="2">
    <location>
        <begin position="1"/>
        <end position="52"/>
    </location>
</feature>
<feature type="compositionally biased region" description="Polar residues" evidence="2">
    <location>
        <begin position="18"/>
        <end position="32"/>
    </location>
</feature>
<feature type="modified residue" description="Phosphoserine" evidence="4">
    <location>
        <position position="463"/>
    </location>
</feature>
<feature type="modified residue" description="Phosphoserine" evidence="4">
    <location>
        <position position="466"/>
    </location>
</feature>
<feature type="modified residue" description="Phosphoserine" evidence="4">
    <location>
        <position position="467"/>
    </location>
</feature>
<organism>
    <name type="scientific">Schizosaccharomyces pombe (strain 972 / ATCC 24843)</name>
    <name type="common">Fission yeast</name>
    <dbReference type="NCBI Taxonomy" id="284812"/>
    <lineage>
        <taxon>Eukaryota</taxon>
        <taxon>Fungi</taxon>
        <taxon>Dikarya</taxon>
        <taxon>Ascomycota</taxon>
        <taxon>Taphrinomycotina</taxon>
        <taxon>Schizosaccharomycetes</taxon>
        <taxon>Schizosaccharomycetales</taxon>
        <taxon>Schizosaccharomycetaceae</taxon>
        <taxon>Schizosaccharomyces</taxon>
    </lineage>
</organism>
<accession>O59785</accession>
<gene>
    <name type="ORF">SPCC320.08</name>
</gene>
<dbReference type="EMBL" id="CU329672">
    <property type="protein sequence ID" value="CAA18310.1"/>
    <property type="molecule type" value="Genomic_DNA"/>
</dbReference>
<dbReference type="PIR" id="T41303">
    <property type="entry name" value="T41303"/>
</dbReference>
<dbReference type="RefSeq" id="NP_587721.1">
    <property type="nucleotide sequence ID" value="NM_001022716.2"/>
</dbReference>
<dbReference type="SMR" id="O59785"/>
<dbReference type="FunCoup" id="O59785">
    <property type="interactions" value="145"/>
</dbReference>
<dbReference type="STRING" id="284812.O59785"/>
<dbReference type="iPTMnet" id="O59785"/>
<dbReference type="PaxDb" id="4896-SPCC320.08.1"/>
<dbReference type="EnsemblFungi" id="SPCC320.08.1">
    <property type="protein sequence ID" value="SPCC320.08.1:pep"/>
    <property type="gene ID" value="SPCC320.08"/>
</dbReference>
<dbReference type="KEGG" id="spo:2539011"/>
<dbReference type="PomBase" id="SPCC320.08"/>
<dbReference type="VEuPathDB" id="FungiDB:SPCC320.08"/>
<dbReference type="eggNOG" id="KOG2766">
    <property type="taxonomic scope" value="Eukaryota"/>
</dbReference>
<dbReference type="HOGENOM" id="CLU_039639_4_1_1"/>
<dbReference type="InParanoid" id="O59785"/>
<dbReference type="OMA" id="IQVFHYS"/>
<dbReference type="PhylomeDB" id="O59785"/>
<dbReference type="PRO" id="PR:O59785"/>
<dbReference type="Proteomes" id="UP000002485">
    <property type="component" value="Chromosome III"/>
</dbReference>
<dbReference type="GO" id="GO:0005794">
    <property type="term" value="C:Golgi apparatus"/>
    <property type="evidence" value="ECO:0007005"/>
    <property type="project" value="PomBase"/>
</dbReference>
<dbReference type="GO" id="GO:0000139">
    <property type="term" value="C:Golgi membrane"/>
    <property type="evidence" value="ECO:0007669"/>
    <property type="project" value="UniProtKB-SubCell"/>
</dbReference>
<dbReference type="GO" id="GO:0022857">
    <property type="term" value="F:transmembrane transporter activity"/>
    <property type="evidence" value="ECO:0000255"/>
    <property type="project" value="PomBase"/>
</dbReference>
<dbReference type="InterPro" id="IPR009262">
    <property type="entry name" value="SLC35_F1/F2/F6"/>
</dbReference>
<dbReference type="InterPro" id="IPR052221">
    <property type="entry name" value="SLC35F_Transporter"/>
</dbReference>
<dbReference type="PANTHER" id="PTHR14233">
    <property type="entry name" value="DUF914-RELATED"/>
    <property type="match status" value="1"/>
</dbReference>
<dbReference type="PANTHER" id="PTHR14233:SF4">
    <property type="entry name" value="SOLUTE CARRIER FAMILY 35 MEMBER F2"/>
    <property type="match status" value="1"/>
</dbReference>
<dbReference type="Pfam" id="PF06027">
    <property type="entry name" value="SLC35F"/>
    <property type="match status" value="1"/>
</dbReference>
<dbReference type="SUPFAM" id="SSF103481">
    <property type="entry name" value="Multidrug resistance efflux transporter EmrE"/>
    <property type="match status" value="1"/>
</dbReference>
<evidence type="ECO:0000255" key="1"/>
<evidence type="ECO:0000256" key="2">
    <source>
        <dbReference type="SAM" id="MobiDB-lite"/>
    </source>
</evidence>
<evidence type="ECO:0000269" key="3">
    <source>
    </source>
</evidence>
<evidence type="ECO:0000269" key="4">
    <source>
    </source>
</evidence>
<evidence type="ECO:0000305" key="5"/>
<keyword id="KW-0333">Golgi apparatus</keyword>
<keyword id="KW-0472">Membrane</keyword>
<keyword id="KW-0597">Phosphoprotein</keyword>
<keyword id="KW-1185">Reference proteome</keyword>
<keyword id="KW-0812">Transmembrane</keyword>
<keyword id="KW-1133">Transmembrane helix</keyword>
<keyword id="KW-0813">Transport</keyword>
<comment type="subcellular location">
    <subcellularLocation>
        <location evidence="3">Golgi apparatus membrane</location>
        <topology evidence="3">Multi-pass membrane protein</topology>
    </subcellularLocation>
</comment>
<comment type="similarity">
    <text evidence="5">Belongs to the SLC35F solute transporter family.</text>
</comment>